<proteinExistence type="inferred from homology"/>
<reference key="1">
    <citation type="submission" date="2007-06" db="EMBL/GenBank/DDBJ databases">
        <title>Complete sequence of Methanococcus vannielii SB.</title>
        <authorList>
            <consortium name="US DOE Joint Genome Institute"/>
            <person name="Copeland A."/>
            <person name="Lucas S."/>
            <person name="Lapidus A."/>
            <person name="Barry K."/>
            <person name="Glavina del Rio T."/>
            <person name="Dalin E."/>
            <person name="Tice H."/>
            <person name="Pitluck S."/>
            <person name="Chain P."/>
            <person name="Malfatti S."/>
            <person name="Shin M."/>
            <person name="Vergez L."/>
            <person name="Schmutz J."/>
            <person name="Larimer F."/>
            <person name="Land M."/>
            <person name="Hauser L."/>
            <person name="Kyrpides N."/>
            <person name="Anderson I."/>
            <person name="Sieprawska-Lupa M."/>
            <person name="Whitman W.B."/>
            <person name="Richardson P."/>
        </authorList>
    </citation>
    <scope>NUCLEOTIDE SEQUENCE [LARGE SCALE GENOMIC DNA]</scope>
    <source>
        <strain>ATCC 35089 / DSM 1224 / JCM 13029 / OCM 148 / SB</strain>
    </source>
</reference>
<gene>
    <name evidence="1" type="primary">aspS</name>
    <name type="ordered locus">Mevan_0926</name>
</gene>
<evidence type="ECO:0000255" key="1">
    <source>
        <dbReference type="HAMAP-Rule" id="MF_02075"/>
    </source>
</evidence>
<feature type="chain" id="PRO_1000006709" description="Aspartate--tRNA(Asp/Asn) ligase">
    <location>
        <begin position="1"/>
        <end position="438"/>
    </location>
</feature>
<feature type="region of interest" description="Aspartate" evidence="1">
    <location>
        <begin position="198"/>
        <end position="201"/>
    </location>
</feature>
<feature type="binding site" evidence="1">
    <location>
        <position position="176"/>
    </location>
    <ligand>
        <name>L-aspartate</name>
        <dbReference type="ChEBI" id="CHEBI:29991"/>
    </ligand>
</feature>
<feature type="binding site" evidence="1">
    <location>
        <begin position="220"/>
        <end position="222"/>
    </location>
    <ligand>
        <name>ATP</name>
        <dbReference type="ChEBI" id="CHEBI:30616"/>
    </ligand>
</feature>
<feature type="binding site" evidence="1">
    <location>
        <position position="220"/>
    </location>
    <ligand>
        <name>L-aspartate</name>
        <dbReference type="ChEBI" id="CHEBI:29991"/>
    </ligand>
</feature>
<feature type="binding site" evidence="1">
    <location>
        <begin position="228"/>
        <end position="230"/>
    </location>
    <ligand>
        <name>ATP</name>
        <dbReference type="ChEBI" id="CHEBI:30616"/>
    </ligand>
</feature>
<feature type="binding site" evidence="1">
    <location>
        <position position="361"/>
    </location>
    <ligand>
        <name>ATP</name>
        <dbReference type="ChEBI" id="CHEBI:30616"/>
    </ligand>
</feature>
<feature type="binding site" evidence="1">
    <location>
        <position position="361"/>
    </location>
    <ligand>
        <name>Mg(2+)</name>
        <dbReference type="ChEBI" id="CHEBI:18420"/>
        <label>2</label>
    </ligand>
</feature>
<feature type="binding site" evidence="1">
    <location>
        <position position="361"/>
    </location>
    <ligand>
        <name>Mg(2+)</name>
        <dbReference type="ChEBI" id="CHEBI:18420"/>
        <label>3</label>
    </ligand>
</feature>
<feature type="binding site" evidence="1">
    <location>
        <position position="364"/>
    </location>
    <ligand>
        <name>L-aspartate</name>
        <dbReference type="ChEBI" id="CHEBI:29991"/>
    </ligand>
</feature>
<feature type="binding site" evidence="1">
    <location>
        <position position="364"/>
    </location>
    <ligand>
        <name>Mg(2+)</name>
        <dbReference type="ChEBI" id="CHEBI:18420"/>
        <label>2</label>
    </ligand>
</feature>
<feature type="binding site" evidence="1">
    <location>
        <position position="368"/>
    </location>
    <ligand>
        <name>L-aspartate</name>
        <dbReference type="ChEBI" id="CHEBI:29991"/>
    </ligand>
</feature>
<feature type="binding site" evidence="1">
    <location>
        <begin position="409"/>
        <end position="412"/>
    </location>
    <ligand>
        <name>ATP</name>
        <dbReference type="ChEBI" id="CHEBI:30616"/>
    </ligand>
</feature>
<feature type="site" description="Important for tRNA non-discrimination" evidence="1">
    <location>
        <position position="91"/>
    </location>
</feature>
<sequence length="438" mass="50440">MYIIADWRRTHYSEQVIPEMDGQEVILMGWVHSIRALGKLAFIILRDREGLIQMVVPKQKVDEETFELAKKLGKEDVITIRGKVVANEKAPKGFEVIPMEIRILNKADAPLPLDPSEKVPAEIDTRLDRRFLDIRRPKIQAIFKIRSEMLKSIRKTFSEEGFIEVNTPKLVASATEGGTELFPISYFEKEAFLGQSPQLYKQMMMAGGFDKVFEIAQIFRAEEHNTRRHLNEAISIDTEMSFVNEKDAMAMLEKVVHNCYTDIEYNRPSEIETLELNFEIPEKTFPKVTYSEAVDVAVSKGVEIEWGEDLSRAAEKAIGDEMGGLYFITEWPTQTRPFYTLPDENDNKICKAFDLMYKELEISSGAQRIHKYDSLVQNIAKRGMNPDSFETYLEAFRYGMPPHAGWGLGADRFTMILTNQENIRECVLFPRDRQRLTP</sequence>
<protein>
    <recommendedName>
        <fullName evidence="1">Aspartate--tRNA(Asp/Asn) ligase</fullName>
        <ecNumber evidence="1">6.1.1.23</ecNumber>
    </recommendedName>
    <alternativeName>
        <fullName evidence="1">Aspartyl-tRNA synthetase</fullName>
        <shortName evidence="1">AspRS</shortName>
    </alternativeName>
    <alternativeName>
        <fullName evidence="1">Non-discriminating aspartyl-tRNA synthetase</fullName>
        <shortName evidence="1">ND-AspRS</shortName>
    </alternativeName>
</protein>
<name>SYDND_METVS</name>
<organism>
    <name type="scientific">Methanococcus vannielii (strain ATCC 35089 / DSM 1224 / JCM 13029 / OCM 148 / SB)</name>
    <dbReference type="NCBI Taxonomy" id="406327"/>
    <lineage>
        <taxon>Archaea</taxon>
        <taxon>Methanobacteriati</taxon>
        <taxon>Methanobacteriota</taxon>
        <taxon>Methanomada group</taxon>
        <taxon>Methanococci</taxon>
        <taxon>Methanococcales</taxon>
        <taxon>Methanococcaceae</taxon>
        <taxon>Methanococcus</taxon>
    </lineage>
</organism>
<accession>A6UQQ8</accession>
<keyword id="KW-0030">Aminoacyl-tRNA synthetase</keyword>
<keyword id="KW-0067">ATP-binding</keyword>
<keyword id="KW-0963">Cytoplasm</keyword>
<keyword id="KW-0436">Ligase</keyword>
<keyword id="KW-0460">Magnesium</keyword>
<keyword id="KW-0479">Metal-binding</keyword>
<keyword id="KW-0547">Nucleotide-binding</keyword>
<keyword id="KW-0648">Protein biosynthesis</keyword>
<comment type="function">
    <text evidence="1">Aspartyl-tRNA synthetase with relaxed tRNA specificity since it is able to aspartylate not only its cognate tRNA(Asp) but also tRNA(Asn). Reaction proceeds in two steps: L-aspartate is first activated by ATP to form Asp-AMP and then transferred to the acceptor end of tRNA(Asp/Asn).</text>
</comment>
<comment type="catalytic activity">
    <reaction evidence="1">
        <text>tRNA(Asx) + L-aspartate + ATP = L-aspartyl-tRNA(Asx) + AMP + diphosphate</text>
        <dbReference type="Rhea" id="RHEA:18349"/>
        <dbReference type="Rhea" id="RHEA-COMP:9710"/>
        <dbReference type="Rhea" id="RHEA-COMP:9711"/>
        <dbReference type="ChEBI" id="CHEBI:29991"/>
        <dbReference type="ChEBI" id="CHEBI:30616"/>
        <dbReference type="ChEBI" id="CHEBI:33019"/>
        <dbReference type="ChEBI" id="CHEBI:78442"/>
        <dbReference type="ChEBI" id="CHEBI:78516"/>
        <dbReference type="ChEBI" id="CHEBI:456215"/>
        <dbReference type="EC" id="6.1.1.23"/>
    </reaction>
</comment>
<comment type="cofactor">
    <cofactor evidence="1">
        <name>Mg(2+)</name>
        <dbReference type="ChEBI" id="CHEBI:18420"/>
    </cofactor>
    <text evidence="1">Binds 3 Mg(2+) cations per subunit. The strongest magnesium site (Mg1) is bound to the beta- and gamma-phosphates of ATP and four water molecules complete its coordination sphere.</text>
</comment>
<comment type="subunit">
    <text evidence="1">Homodimer.</text>
</comment>
<comment type="subcellular location">
    <subcellularLocation>
        <location evidence="1">Cytoplasm</location>
    </subcellularLocation>
</comment>
<comment type="similarity">
    <text evidence="1">Belongs to the class-II aminoacyl-tRNA synthetase family. Type 2 subfamily.</text>
</comment>
<dbReference type="EC" id="6.1.1.23" evidence="1"/>
<dbReference type="EMBL" id="CP000742">
    <property type="protein sequence ID" value="ABR54830.1"/>
    <property type="molecule type" value="Genomic_DNA"/>
</dbReference>
<dbReference type="RefSeq" id="WP_012065759.1">
    <property type="nucleotide sequence ID" value="NC_009634.1"/>
</dbReference>
<dbReference type="SMR" id="A6UQQ8"/>
<dbReference type="STRING" id="406327.Mevan_0926"/>
<dbReference type="GeneID" id="5326061"/>
<dbReference type="KEGG" id="mvn:Mevan_0926"/>
<dbReference type="eggNOG" id="arCOG00406">
    <property type="taxonomic scope" value="Archaea"/>
</dbReference>
<dbReference type="HOGENOM" id="CLU_004553_2_1_2"/>
<dbReference type="OrthoDB" id="5908at2157"/>
<dbReference type="Proteomes" id="UP000001107">
    <property type="component" value="Chromosome"/>
</dbReference>
<dbReference type="GO" id="GO:0017101">
    <property type="term" value="C:aminoacyl-tRNA synthetase multienzyme complex"/>
    <property type="evidence" value="ECO:0007669"/>
    <property type="project" value="TreeGrafter"/>
</dbReference>
<dbReference type="GO" id="GO:0005829">
    <property type="term" value="C:cytosol"/>
    <property type="evidence" value="ECO:0007669"/>
    <property type="project" value="TreeGrafter"/>
</dbReference>
<dbReference type="GO" id="GO:0004815">
    <property type="term" value="F:aspartate-tRNA ligase activity"/>
    <property type="evidence" value="ECO:0007669"/>
    <property type="project" value="UniProtKB-UniRule"/>
</dbReference>
<dbReference type="GO" id="GO:0050560">
    <property type="term" value="F:aspartate-tRNA(Asn) ligase activity"/>
    <property type="evidence" value="ECO:0007669"/>
    <property type="project" value="UniProtKB-EC"/>
</dbReference>
<dbReference type="GO" id="GO:0005524">
    <property type="term" value="F:ATP binding"/>
    <property type="evidence" value="ECO:0007669"/>
    <property type="project" value="UniProtKB-UniRule"/>
</dbReference>
<dbReference type="GO" id="GO:0000287">
    <property type="term" value="F:magnesium ion binding"/>
    <property type="evidence" value="ECO:0007669"/>
    <property type="project" value="UniProtKB-UniRule"/>
</dbReference>
<dbReference type="GO" id="GO:0003723">
    <property type="term" value="F:RNA binding"/>
    <property type="evidence" value="ECO:0007669"/>
    <property type="project" value="TreeGrafter"/>
</dbReference>
<dbReference type="GO" id="GO:0006422">
    <property type="term" value="P:aspartyl-tRNA aminoacylation"/>
    <property type="evidence" value="ECO:0007669"/>
    <property type="project" value="UniProtKB-UniRule"/>
</dbReference>
<dbReference type="CDD" id="cd00776">
    <property type="entry name" value="AsxRS_core"/>
    <property type="match status" value="1"/>
</dbReference>
<dbReference type="CDD" id="cd04316">
    <property type="entry name" value="ND_PkAspRS_like_N"/>
    <property type="match status" value="1"/>
</dbReference>
<dbReference type="FunFam" id="3.30.930.10:FF:000038">
    <property type="entry name" value="Aspartate--tRNA ligase"/>
    <property type="match status" value="1"/>
</dbReference>
<dbReference type="FunFam" id="2.40.50.140:FF:000324">
    <property type="entry name" value="Aspartate--tRNA(Asp/Asn) ligase"/>
    <property type="match status" value="1"/>
</dbReference>
<dbReference type="Gene3D" id="3.30.930.10">
    <property type="entry name" value="Bira Bifunctional Protein, Domain 2"/>
    <property type="match status" value="1"/>
</dbReference>
<dbReference type="Gene3D" id="2.40.50.140">
    <property type="entry name" value="Nucleic acid-binding proteins"/>
    <property type="match status" value="1"/>
</dbReference>
<dbReference type="HAMAP" id="MF_02075">
    <property type="entry name" value="Asp_tRNA_synth_type2"/>
    <property type="match status" value="1"/>
</dbReference>
<dbReference type="InterPro" id="IPR004364">
    <property type="entry name" value="Aa-tRNA-synt_II"/>
</dbReference>
<dbReference type="InterPro" id="IPR006195">
    <property type="entry name" value="aa-tRNA-synth_II"/>
</dbReference>
<dbReference type="InterPro" id="IPR045864">
    <property type="entry name" value="aa-tRNA-synth_II/BPL/LPL"/>
</dbReference>
<dbReference type="InterPro" id="IPR004523">
    <property type="entry name" value="Asp-tRNA_synthase_2"/>
</dbReference>
<dbReference type="InterPro" id="IPR002312">
    <property type="entry name" value="Asp/Asn-tRNA-synth_IIb"/>
</dbReference>
<dbReference type="InterPro" id="IPR012340">
    <property type="entry name" value="NA-bd_OB-fold"/>
</dbReference>
<dbReference type="InterPro" id="IPR004365">
    <property type="entry name" value="NA-bd_OB_tRNA"/>
</dbReference>
<dbReference type="NCBIfam" id="TIGR00458">
    <property type="entry name" value="aspS_nondisc"/>
    <property type="match status" value="1"/>
</dbReference>
<dbReference type="NCBIfam" id="NF003483">
    <property type="entry name" value="PRK05159.1"/>
    <property type="match status" value="1"/>
</dbReference>
<dbReference type="PANTHER" id="PTHR43450:SF1">
    <property type="entry name" value="ASPARTATE--TRNA LIGASE, CYTOPLASMIC"/>
    <property type="match status" value="1"/>
</dbReference>
<dbReference type="PANTHER" id="PTHR43450">
    <property type="entry name" value="ASPARTYL-TRNA SYNTHETASE"/>
    <property type="match status" value="1"/>
</dbReference>
<dbReference type="Pfam" id="PF00152">
    <property type="entry name" value="tRNA-synt_2"/>
    <property type="match status" value="1"/>
</dbReference>
<dbReference type="Pfam" id="PF01336">
    <property type="entry name" value="tRNA_anti-codon"/>
    <property type="match status" value="1"/>
</dbReference>
<dbReference type="PRINTS" id="PR01042">
    <property type="entry name" value="TRNASYNTHASP"/>
</dbReference>
<dbReference type="SUPFAM" id="SSF55681">
    <property type="entry name" value="Class II aaRS and biotin synthetases"/>
    <property type="match status" value="1"/>
</dbReference>
<dbReference type="SUPFAM" id="SSF50249">
    <property type="entry name" value="Nucleic acid-binding proteins"/>
    <property type="match status" value="1"/>
</dbReference>
<dbReference type="PROSITE" id="PS50862">
    <property type="entry name" value="AA_TRNA_LIGASE_II"/>
    <property type="match status" value="1"/>
</dbReference>